<comment type="function">
    <text evidence="1">Binds as a heterodimer with protein bS6 to the central domain of the 16S rRNA, where it helps stabilize the platform of the 30S subunit.</text>
</comment>
<comment type="subunit">
    <text evidence="1">Part of the 30S ribosomal subunit. Forms a tight heterodimer with protein bS6.</text>
</comment>
<comment type="similarity">
    <text evidence="1">Belongs to the bacterial ribosomal protein bS18 family.</text>
</comment>
<name>RS18_ACIBS</name>
<evidence type="ECO:0000255" key="1">
    <source>
        <dbReference type="HAMAP-Rule" id="MF_00270"/>
    </source>
</evidence>
<evidence type="ECO:0000305" key="2"/>
<organism>
    <name type="scientific">Acinetobacter baumannii (strain SDF)</name>
    <dbReference type="NCBI Taxonomy" id="509170"/>
    <lineage>
        <taxon>Bacteria</taxon>
        <taxon>Pseudomonadati</taxon>
        <taxon>Pseudomonadota</taxon>
        <taxon>Gammaproteobacteria</taxon>
        <taxon>Moraxellales</taxon>
        <taxon>Moraxellaceae</taxon>
        <taxon>Acinetobacter</taxon>
        <taxon>Acinetobacter calcoaceticus/baumannii complex</taxon>
    </lineage>
</organism>
<accession>B0VM09</accession>
<gene>
    <name evidence="1" type="primary">rpsR</name>
    <name type="ordered locus">ABSDF1569</name>
</gene>
<proteinExistence type="inferred from homology"/>
<reference key="1">
    <citation type="journal article" date="2008" name="PLoS ONE">
        <title>Comparative analysis of Acinetobacters: three genomes for three lifestyles.</title>
        <authorList>
            <person name="Vallenet D."/>
            <person name="Nordmann P."/>
            <person name="Barbe V."/>
            <person name="Poirel L."/>
            <person name="Mangenot S."/>
            <person name="Bataille E."/>
            <person name="Dossat C."/>
            <person name="Gas S."/>
            <person name="Kreimeyer A."/>
            <person name="Lenoble P."/>
            <person name="Oztas S."/>
            <person name="Poulain J."/>
            <person name="Segurens B."/>
            <person name="Robert C."/>
            <person name="Abergel C."/>
            <person name="Claverie J.-M."/>
            <person name="Raoult D."/>
            <person name="Medigue C."/>
            <person name="Weissenbach J."/>
            <person name="Cruveiller S."/>
        </authorList>
    </citation>
    <scope>NUCLEOTIDE SEQUENCE [LARGE SCALE GENOMIC DNA]</scope>
    <source>
        <strain>SDF</strain>
    </source>
</reference>
<feature type="chain" id="PRO_1000114390" description="Small ribosomal subunit protein bS18">
    <location>
        <begin position="1"/>
        <end position="75"/>
    </location>
</feature>
<keyword id="KW-0687">Ribonucleoprotein</keyword>
<keyword id="KW-0689">Ribosomal protein</keyword>
<keyword id="KW-0694">RNA-binding</keyword>
<keyword id="KW-0699">rRNA-binding</keyword>
<dbReference type="EMBL" id="CU468230">
    <property type="protein sequence ID" value="CAP00909.1"/>
    <property type="molecule type" value="Genomic_DNA"/>
</dbReference>
<dbReference type="SMR" id="B0VM09"/>
<dbReference type="KEGG" id="abm:ABSDF1569"/>
<dbReference type="HOGENOM" id="CLU_148710_2_3_6"/>
<dbReference type="Proteomes" id="UP000001741">
    <property type="component" value="Chromosome"/>
</dbReference>
<dbReference type="GO" id="GO:0022627">
    <property type="term" value="C:cytosolic small ribosomal subunit"/>
    <property type="evidence" value="ECO:0007669"/>
    <property type="project" value="TreeGrafter"/>
</dbReference>
<dbReference type="GO" id="GO:0070181">
    <property type="term" value="F:small ribosomal subunit rRNA binding"/>
    <property type="evidence" value="ECO:0007669"/>
    <property type="project" value="TreeGrafter"/>
</dbReference>
<dbReference type="GO" id="GO:0003735">
    <property type="term" value="F:structural constituent of ribosome"/>
    <property type="evidence" value="ECO:0007669"/>
    <property type="project" value="InterPro"/>
</dbReference>
<dbReference type="GO" id="GO:0006412">
    <property type="term" value="P:translation"/>
    <property type="evidence" value="ECO:0007669"/>
    <property type="project" value="UniProtKB-UniRule"/>
</dbReference>
<dbReference type="FunFam" id="4.10.640.10:FF:000001">
    <property type="entry name" value="30S ribosomal protein S18"/>
    <property type="match status" value="1"/>
</dbReference>
<dbReference type="Gene3D" id="4.10.640.10">
    <property type="entry name" value="Ribosomal protein S18"/>
    <property type="match status" value="1"/>
</dbReference>
<dbReference type="HAMAP" id="MF_00270">
    <property type="entry name" value="Ribosomal_bS18"/>
    <property type="match status" value="1"/>
</dbReference>
<dbReference type="InterPro" id="IPR001648">
    <property type="entry name" value="Ribosomal_bS18"/>
</dbReference>
<dbReference type="InterPro" id="IPR018275">
    <property type="entry name" value="Ribosomal_bS18_CS"/>
</dbReference>
<dbReference type="InterPro" id="IPR036870">
    <property type="entry name" value="Ribosomal_bS18_sf"/>
</dbReference>
<dbReference type="NCBIfam" id="TIGR00165">
    <property type="entry name" value="S18"/>
    <property type="match status" value="1"/>
</dbReference>
<dbReference type="PANTHER" id="PTHR13479">
    <property type="entry name" value="30S RIBOSOMAL PROTEIN S18"/>
    <property type="match status" value="1"/>
</dbReference>
<dbReference type="PANTHER" id="PTHR13479:SF40">
    <property type="entry name" value="SMALL RIBOSOMAL SUBUNIT PROTEIN BS18M"/>
    <property type="match status" value="1"/>
</dbReference>
<dbReference type="Pfam" id="PF01084">
    <property type="entry name" value="Ribosomal_S18"/>
    <property type="match status" value="1"/>
</dbReference>
<dbReference type="PRINTS" id="PR00974">
    <property type="entry name" value="RIBOSOMALS18"/>
</dbReference>
<dbReference type="SUPFAM" id="SSF46911">
    <property type="entry name" value="Ribosomal protein S18"/>
    <property type="match status" value="1"/>
</dbReference>
<dbReference type="PROSITE" id="PS00057">
    <property type="entry name" value="RIBOSOMAL_S18"/>
    <property type="match status" value="1"/>
</dbReference>
<sequence>MARFYRRRKFCRFTAENVAYIDYKDIDTLKQYITENGKIVPSRITGTKARYQRQLALAIKQARYLSLIPYTDNHK</sequence>
<protein>
    <recommendedName>
        <fullName evidence="1">Small ribosomal subunit protein bS18</fullName>
    </recommendedName>
    <alternativeName>
        <fullName evidence="2">30S ribosomal protein S18</fullName>
    </alternativeName>
</protein>